<proteinExistence type="evidence at protein level"/>
<dbReference type="EC" id="1.14.19.77" evidence="6 7"/>
<dbReference type="EMBL" id="AF155120">
    <property type="protein sequence ID" value="AAF08702.1"/>
    <property type="molecule type" value="mRNA"/>
</dbReference>
<dbReference type="EMBL" id="AB044550">
    <property type="protein sequence ID" value="BAB18652.1"/>
    <property type="molecule type" value="mRNA"/>
</dbReference>
<dbReference type="EMBL" id="AK023028">
    <property type="protein sequence ID" value="BAB14364.1"/>
    <property type="molecule type" value="mRNA"/>
</dbReference>
<dbReference type="EMBL" id="AL034423">
    <property type="status" value="NOT_ANNOTATED_CDS"/>
    <property type="molecule type" value="Genomic_DNA"/>
</dbReference>
<dbReference type="EMBL" id="BC142966">
    <property type="protein sequence ID" value="AAI42967.1"/>
    <property type="molecule type" value="mRNA"/>
</dbReference>
<dbReference type="CCDS" id="CCDS13428.1">
    <molecule id="A5PLL7-1"/>
</dbReference>
<dbReference type="CCDS" id="CCDS54473.1">
    <molecule id="A5PLL7-2"/>
</dbReference>
<dbReference type="RefSeq" id="NP_001155977.2">
    <molecule id="A5PLL7-2"/>
    <property type="nucleotide sequence ID" value="NM_001162505.2"/>
</dbReference>
<dbReference type="RefSeq" id="NP_954580.2">
    <molecule id="A5PLL7-1"/>
    <property type="nucleotide sequence ID" value="NM_199129.4"/>
</dbReference>
<dbReference type="RefSeq" id="NP_954673.1">
    <property type="nucleotide sequence ID" value="NM_199203.2"/>
</dbReference>
<dbReference type="BioGRID" id="132320">
    <property type="interactions" value="34"/>
</dbReference>
<dbReference type="BioGRID" id="132321">
    <property type="interactions" value="42"/>
</dbReference>
<dbReference type="FunCoup" id="A5PLL7">
    <property type="interactions" value="904"/>
</dbReference>
<dbReference type="IntAct" id="A5PLL7">
    <property type="interactions" value="6"/>
</dbReference>
<dbReference type="MINT" id="A5PLL7"/>
<dbReference type="STRING" id="9606.ENSP00000360715"/>
<dbReference type="SwissLipids" id="SLP:000001973"/>
<dbReference type="iPTMnet" id="A5PLL7"/>
<dbReference type="PhosphoSitePlus" id="A5PLL7"/>
<dbReference type="SwissPalm" id="A5PLL7"/>
<dbReference type="BioMuta" id="TMEM189"/>
<dbReference type="jPOST" id="A5PLL7"/>
<dbReference type="MassIVE" id="A5PLL7"/>
<dbReference type="PaxDb" id="9606-ENSP00000360715"/>
<dbReference type="PeptideAtlas" id="A5PLL7"/>
<dbReference type="ProteomicsDB" id="739">
    <molecule id="A5PLL7-1"/>
</dbReference>
<dbReference type="Pumba" id="A5PLL7"/>
<dbReference type="Antibodypedia" id="35022">
    <property type="antibodies" value="39 antibodies from 16 providers"/>
</dbReference>
<dbReference type="DNASU" id="387522"/>
<dbReference type="Ensembl" id="ENST00000371650.9">
    <molecule id="A5PLL7-2"/>
    <property type="protein sequence ID" value="ENSP00000360713.5"/>
    <property type="gene ID" value="ENSG00000240849.11"/>
</dbReference>
<dbReference type="Ensembl" id="ENST00000371652.9">
    <molecule id="A5PLL7-1"/>
    <property type="protein sequence ID" value="ENSP00000360715.4"/>
    <property type="gene ID" value="ENSG00000240849.11"/>
</dbReference>
<dbReference type="GeneID" id="387521"/>
<dbReference type="KEGG" id="hsa:387521"/>
<dbReference type="KEGG" id="hsa:387522"/>
<dbReference type="MANE-Select" id="ENST00000371652.9">
    <property type="protein sequence ID" value="ENSP00000360715.4"/>
    <property type="RefSeq nucleotide sequence ID" value="NM_199129.4"/>
    <property type="RefSeq protein sequence ID" value="NP_954580.2"/>
</dbReference>
<dbReference type="UCSC" id="uc002xvg.3">
    <molecule id="A5PLL7-1"/>
    <property type="organism name" value="human"/>
</dbReference>
<dbReference type="AGR" id="HGNC:16735"/>
<dbReference type="AGR" id="HGNC:33521"/>
<dbReference type="CTD" id="387521"/>
<dbReference type="CTD" id="387522"/>
<dbReference type="DisGeNET" id="387521"/>
<dbReference type="DisGeNET" id="387522"/>
<dbReference type="GeneCards" id="PEDS1"/>
<dbReference type="HGNC" id="HGNC:16735">
    <property type="gene designation" value="PEDS1"/>
</dbReference>
<dbReference type="HPA" id="ENSG00000240849">
    <property type="expression patterns" value="Low tissue specificity"/>
</dbReference>
<dbReference type="MIM" id="610994">
    <property type="type" value="gene"/>
</dbReference>
<dbReference type="neXtProt" id="NX_A5PLL7"/>
<dbReference type="OpenTargets" id="ENSG00000240849"/>
<dbReference type="PharmGKB" id="PA162406226"/>
<dbReference type="VEuPathDB" id="HostDB:ENSG00000240849"/>
<dbReference type="eggNOG" id="KOG3011">
    <property type="taxonomic scope" value="Eukaryota"/>
</dbReference>
<dbReference type="GeneTree" id="ENSGT00940000162354"/>
<dbReference type="HOGENOM" id="CLU_065233_1_1_1"/>
<dbReference type="InParanoid" id="A5PLL7"/>
<dbReference type="OMA" id="KFVWTCY"/>
<dbReference type="OrthoDB" id="5103at2759"/>
<dbReference type="PAN-GO" id="A5PLL7">
    <property type="GO annotations" value="3 GO annotations based on evolutionary models"/>
</dbReference>
<dbReference type="PhylomeDB" id="A5PLL7"/>
<dbReference type="BioCyc" id="MetaCyc:G66-30744-MONOMER"/>
<dbReference type="BRENDA" id="1.14.19.77">
    <property type="organism ID" value="2681"/>
</dbReference>
<dbReference type="PathwayCommons" id="A5PLL7"/>
<dbReference type="SignaLink" id="A5PLL7"/>
<dbReference type="UniPathway" id="UPA00199"/>
<dbReference type="BioGRID-ORCS" id="387521">
    <property type="hits" value="71 hits in 1143 CRISPR screens"/>
</dbReference>
<dbReference type="BioGRID-ORCS" id="387522">
    <property type="hits" value="76 hits in 964 CRISPR screens"/>
</dbReference>
<dbReference type="GeneWiki" id="Kua-UEV"/>
<dbReference type="Pharos" id="A5PLL7">
    <property type="development level" value="Tdark"/>
</dbReference>
<dbReference type="PRO" id="PR:A5PLL7"/>
<dbReference type="Proteomes" id="UP000005640">
    <property type="component" value="Chromosome 20"/>
</dbReference>
<dbReference type="RNAct" id="A5PLL7">
    <property type="molecule type" value="protein"/>
</dbReference>
<dbReference type="Bgee" id="ENSG00000240849">
    <property type="expression patterns" value="Expressed in lower esophagus mucosa and 162 other cell types or tissues"/>
</dbReference>
<dbReference type="ExpressionAtlas" id="A5PLL7">
    <property type="expression patterns" value="baseline and differential"/>
</dbReference>
<dbReference type="GO" id="GO:0005783">
    <property type="term" value="C:endoplasmic reticulum"/>
    <property type="evidence" value="ECO:0000314"/>
    <property type="project" value="HPA"/>
</dbReference>
<dbReference type="GO" id="GO:0005789">
    <property type="term" value="C:endoplasmic reticulum membrane"/>
    <property type="evidence" value="ECO:0000314"/>
    <property type="project" value="UniProtKB"/>
</dbReference>
<dbReference type="GO" id="GO:0050207">
    <property type="term" value="F:plasmanylethanolamine desaturase activity"/>
    <property type="evidence" value="ECO:0000314"/>
    <property type="project" value="UniProtKB"/>
</dbReference>
<dbReference type="GO" id="GO:0008611">
    <property type="term" value="P:ether lipid biosynthetic process"/>
    <property type="evidence" value="ECO:0000314"/>
    <property type="project" value="UniProtKB"/>
</dbReference>
<dbReference type="GO" id="GO:0006631">
    <property type="term" value="P:fatty acid metabolic process"/>
    <property type="evidence" value="ECO:0007669"/>
    <property type="project" value="UniProtKB-UniPathway"/>
</dbReference>
<dbReference type="InterPro" id="IPR019547">
    <property type="entry name" value="Lipid_desat"/>
</dbReference>
<dbReference type="InterPro" id="IPR052601">
    <property type="entry name" value="Plasmalogen_desaturase"/>
</dbReference>
<dbReference type="PANTHER" id="PTHR48177:SF1">
    <property type="entry name" value="PLASMANYLETHANOLAMINE DESATURASE 1"/>
    <property type="match status" value="1"/>
</dbReference>
<dbReference type="PANTHER" id="PTHR48177">
    <property type="entry name" value="TRANSMEMBRANE PROTEIN 189"/>
    <property type="match status" value="1"/>
</dbReference>
<dbReference type="Pfam" id="PF10520">
    <property type="entry name" value="Lipid_desat"/>
    <property type="match status" value="1"/>
</dbReference>
<accession>A5PLL7</accession>
<feature type="chain" id="PRO_0000319993" description="Plasmanylethanolamine desaturase 1">
    <location>
        <begin position="1"/>
        <end position="270"/>
    </location>
</feature>
<feature type="transmembrane region" description="Helical" evidence="2">
    <location>
        <begin position="47"/>
        <end position="67"/>
    </location>
</feature>
<feature type="transmembrane region" description="Helical" evidence="2">
    <location>
        <begin position="74"/>
        <end position="94"/>
    </location>
</feature>
<feature type="transmembrane region" description="Helical" evidence="2">
    <location>
        <begin position="161"/>
        <end position="181"/>
    </location>
</feature>
<feature type="short sequence motif" description="Histidine box-1" evidence="6">
    <location>
        <begin position="186"/>
        <end position="190"/>
    </location>
</feature>
<feature type="short sequence motif" description="Histidine box-2" evidence="6">
    <location>
        <begin position="213"/>
        <end position="217"/>
    </location>
</feature>
<feature type="site" description="Essential for catalytic activity" evidence="6">
    <location>
        <position position="95"/>
    </location>
</feature>
<feature type="site" description="Essential for catalytic activity" evidence="6">
    <location>
        <position position="120"/>
    </location>
</feature>
<feature type="site" description="Essential for catalytic activity" evidence="6">
    <location>
        <position position="121"/>
    </location>
</feature>
<feature type="site" description="Essential for catalytic activity" evidence="1">
    <location>
        <position position="186"/>
    </location>
</feature>
<feature type="site" description="Essential for catalytic activity" evidence="1">
    <location>
        <position position="190"/>
    </location>
</feature>
<feature type="site" description="Essential for catalytic activity" evidence="1">
    <location>
        <position position="214"/>
    </location>
</feature>
<feature type="site" description="Essential for catalytic activity" evidence="1">
    <location>
        <position position="217"/>
    </location>
</feature>
<feature type="site" description="Essential for catalytic activity" evidence="1">
    <location>
        <position position="218"/>
    </location>
</feature>
<feature type="splice variant" id="VSP_054091" description="In isoform 2." evidence="9">
    <location>
        <begin position="109"/>
        <end position="111"/>
    </location>
</feature>
<feature type="sequence variant" id="VAR_059732" description="In dbSNP:rs2026757.">
    <original>W</original>
    <variation>G</variation>
    <location>
        <position position="7"/>
    </location>
</feature>
<feature type="mutagenesis site" description="Loss of plasmanylethanolamine desaturase activity." evidence="6">
    <original>H</original>
    <variation>A</variation>
    <location>
        <position position="95"/>
    </location>
</feature>
<feature type="mutagenesis site" description="Loss of plasmanylethanolamine desaturase activity." evidence="6">
    <original>H</original>
    <variation>A</variation>
    <location>
        <position position="120"/>
    </location>
</feature>
<feature type="mutagenesis site" description="Loss of plasmanylethanolamine desaturase activity." evidence="6">
    <original>H</original>
    <variation>A</variation>
    <location>
        <position position="121"/>
    </location>
</feature>
<feature type="mutagenesis site" description="Loss of plasmanylethanolamine desaturase activity." evidence="6">
    <original>H</original>
    <variation>A</variation>
    <location>
        <position position="130"/>
    </location>
</feature>
<feature type="mutagenesis site" description="Loss of plasmanylethanolamine desaturase activity." evidence="6">
    <original>H</original>
    <variation>A</variation>
    <location>
        <position position="186"/>
    </location>
</feature>
<feature type="mutagenesis site" description="Loss of plasmanylethanolamine desaturase activity." evidence="6">
    <original>H</original>
    <variation>A</variation>
    <location>
        <position position="190"/>
    </location>
</feature>
<feature type="mutagenesis site" description="No effect on plasmanylethanolamine desaturase activity." evidence="6">
    <original>H</original>
    <variation>A</variation>
    <location>
        <position position="206"/>
    </location>
</feature>
<feature type="mutagenesis site" description="No effect on plasmanylethanolamine desaturase activity." evidence="6">
    <original>H</original>
    <variation>A</variation>
    <location>
        <position position="213"/>
    </location>
</feature>
<feature type="mutagenesis site" description="Loss of plasmanylethanolamine desaturase activity." evidence="6">
    <original>H</original>
    <variation>A</variation>
    <location>
        <position position="214"/>
    </location>
</feature>
<feature type="mutagenesis site" description="Loss of plasmanylethanolamine desaturase activity." evidence="6">
    <original>H</original>
    <variation>A</variation>
    <location>
        <position position="217"/>
    </location>
</feature>
<feature type="mutagenesis site" description="Loss of plasmanylethanolamine desaturase activity." evidence="6">
    <original>H</original>
    <variation>A</variation>
    <location>
        <position position="218"/>
    </location>
</feature>
<feature type="mutagenesis site" description="No effect on desaturase plasmanylethanolamine activity." evidence="6">
    <original>H</original>
    <variation>A</variation>
    <location>
        <position position="222"/>
    </location>
</feature>
<feature type="sequence conflict" description="In Ref. 1; AAF08702, 2; BAB18652, 4; BAB14364 and 5; AAI42967." evidence="12" ref="1 2 4 5">
    <original>N</original>
    <variation>D</variation>
    <location>
        <position position="6"/>
    </location>
</feature>
<feature type="sequence conflict" description="In Ref. 5; AAI42967." evidence="12" ref="5">
    <original>H</original>
    <variation>N</variation>
    <location>
        <position position="121"/>
    </location>
</feature>
<feature type="sequence conflict" description="In Ref. 5; AAI42967." evidence="12" ref="5">
    <original>P</original>
    <variation>H</variation>
    <location>
        <position position="167"/>
    </location>
</feature>
<protein>
    <recommendedName>
        <fullName evidence="14">Plasmanylethanolamine desaturase 1</fullName>
        <ecNumber evidence="6 7">1.14.19.77</ecNumber>
    </recommendedName>
    <alternativeName>
        <fullName evidence="14">Transmembrane protein 189</fullName>
    </alternativeName>
</protein>
<name>PEDS1_HUMAN</name>
<organism>
    <name type="scientific">Homo sapiens</name>
    <name type="common">Human</name>
    <dbReference type="NCBI Taxonomy" id="9606"/>
    <lineage>
        <taxon>Eukaryota</taxon>
        <taxon>Metazoa</taxon>
        <taxon>Chordata</taxon>
        <taxon>Craniata</taxon>
        <taxon>Vertebrata</taxon>
        <taxon>Euteleostomi</taxon>
        <taxon>Mammalia</taxon>
        <taxon>Eutheria</taxon>
        <taxon>Euarchontoglires</taxon>
        <taxon>Primates</taxon>
        <taxon>Haplorrhini</taxon>
        <taxon>Catarrhini</taxon>
        <taxon>Hominidae</taxon>
        <taxon>Homo</taxon>
    </lineage>
</organism>
<sequence length="270" mass="31135">MAGAENWPGQQLELDEDEASCCRWGAQHAGARELAALYSPGKRLQEWCSVILCFSLIAHNLVHLLLLARWEDTPLVILGVVAGALIADFLSGLVHWGADTWGSVELPIVGKAFIRPFREHHIDPTAITRHDFIETNGDNCLVTLLPLLNMAYKFRTHSPEALEQLYPWECFVFCLIIFGTFTNQIHKWSHTYFGLPRWVTLLQDWHVILPRKHHRIHHVSPHETYFCITTGWLNYPLEKIGFWRRLEDLIQGLTGEKPRADDMKWAQKIK</sequence>
<reference evidence="12" key="1">
    <citation type="journal article" date="2000" name="Genome Res.">
        <title>Fusion of the human gene for the polyubiquitination coeffector UEV1 with Kua, a newly identified gene.</title>
        <authorList>
            <person name="Thomson T.M."/>
            <person name="Lozano J.J."/>
            <person name="Loukili N."/>
            <person name="Carrio R."/>
            <person name="Serras F."/>
            <person name="Cormand B."/>
            <person name="Valeri M."/>
            <person name="Diaz V.M."/>
            <person name="Abril J."/>
            <person name="Burset M."/>
            <person name="Merino J."/>
            <person name="Macaya A."/>
            <person name="Corominas M."/>
            <person name="Guigo R."/>
        </authorList>
    </citation>
    <scope>NUCLEOTIDE SEQUENCE [MRNA] (ISOFORM 2)</scope>
    <scope>SUBCELLULAR LOCATION</scope>
    <scope>IDENTIFICATION OF PEDS1-UBE2V1 FUSION PROTEIN</scope>
    <source>
        <tissue evidence="3">Colon cancer</tissue>
    </source>
</reference>
<reference evidence="12" key="2">
    <citation type="journal article" date="2001" name="Cancer Res.">
        <title>Molecular basis of T cell-mediated recognition of pancreatic cancer cells.</title>
        <authorList>
            <person name="Ito M."/>
            <person name="Shichijo S."/>
            <person name="Tsuda N."/>
            <person name="Ochi M."/>
            <person name="Harashima N."/>
            <person name="Saito N."/>
            <person name="Itoh K."/>
        </authorList>
    </citation>
    <scope>NUCLEOTIDE SEQUENCE [MRNA]</scope>
    <source>
        <tissue evidence="4">Pancreatic cancer</tissue>
    </source>
</reference>
<reference evidence="12" key="3">
    <citation type="journal article" date="2004" name="Nat. Genet.">
        <title>Complete sequencing and characterization of 21,243 full-length human cDNAs.</title>
        <authorList>
            <person name="Ota T."/>
            <person name="Suzuki Y."/>
            <person name="Nishikawa T."/>
            <person name="Otsuki T."/>
            <person name="Sugiyama T."/>
            <person name="Irie R."/>
            <person name="Wakamatsu A."/>
            <person name="Hayashi K."/>
            <person name="Sato H."/>
            <person name="Nagai K."/>
            <person name="Kimura K."/>
            <person name="Makita H."/>
            <person name="Sekine M."/>
            <person name="Obayashi M."/>
            <person name="Nishi T."/>
            <person name="Shibahara T."/>
            <person name="Tanaka T."/>
            <person name="Ishii S."/>
            <person name="Yamamoto J."/>
            <person name="Saito K."/>
            <person name="Kawai Y."/>
            <person name="Isono Y."/>
            <person name="Nakamura Y."/>
            <person name="Nagahari K."/>
            <person name="Murakami K."/>
            <person name="Yasuda T."/>
            <person name="Iwayanagi T."/>
            <person name="Wagatsuma M."/>
            <person name="Shiratori A."/>
            <person name="Sudo H."/>
            <person name="Hosoiri T."/>
            <person name="Kaku Y."/>
            <person name="Kodaira H."/>
            <person name="Kondo H."/>
            <person name="Sugawara M."/>
            <person name="Takahashi M."/>
            <person name="Kanda K."/>
            <person name="Yokoi T."/>
            <person name="Furuya T."/>
            <person name="Kikkawa E."/>
            <person name="Omura Y."/>
            <person name="Abe K."/>
            <person name="Kamihara K."/>
            <person name="Katsuta N."/>
            <person name="Sato K."/>
            <person name="Tanikawa M."/>
            <person name="Yamazaki M."/>
            <person name="Ninomiya K."/>
            <person name="Ishibashi T."/>
            <person name="Yamashita H."/>
            <person name="Murakawa K."/>
            <person name="Fujimori K."/>
            <person name="Tanai H."/>
            <person name="Kimata M."/>
            <person name="Watanabe M."/>
            <person name="Hiraoka S."/>
            <person name="Chiba Y."/>
            <person name="Ishida S."/>
            <person name="Ono Y."/>
            <person name="Takiguchi S."/>
            <person name="Watanabe S."/>
            <person name="Yosida M."/>
            <person name="Hotuta T."/>
            <person name="Kusano J."/>
            <person name="Kanehori K."/>
            <person name="Takahashi-Fujii A."/>
            <person name="Hara H."/>
            <person name="Tanase T.-O."/>
            <person name="Nomura Y."/>
            <person name="Togiya S."/>
            <person name="Komai F."/>
            <person name="Hara R."/>
            <person name="Takeuchi K."/>
            <person name="Arita M."/>
            <person name="Imose N."/>
            <person name="Musashino K."/>
            <person name="Yuuki H."/>
            <person name="Oshima A."/>
            <person name="Sasaki N."/>
            <person name="Aotsuka S."/>
            <person name="Yoshikawa Y."/>
            <person name="Matsunawa H."/>
            <person name="Ichihara T."/>
            <person name="Shiohata N."/>
            <person name="Sano S."/>
            <person name="Moriya S."/>
            <person name="Momiyama H."/>
            <person name="Satoh N."/>
            <person name="Takami S."/>
            <person name="Terashima Y."/>
            <person name="Suzuki O."/>
            <person name="Nakagawa S."/>
            <person name="Senoh A."/>
            <person name="Mizoguchi H."/>
            <person name="Goto Y."/>
            <person name="Shimizu F."/>
            <person name="Wakebe H."/>
            <person name="Hishigaki H."/>
            <person name="Watanabe T."/>
            <person name="Sugiyama A."/>
            <person name="Takemoto M."/>
            <person name="Kawakami B."/>
            <person name="Yamazaki M."/>
            <person name="Watanabe K."/>
            <person name="Kumagai A."/>
            <person name="Itakura S."/>
            <person name="Fukuzumi Y."/>
            <person name="Fujimori Y."/>
            <person name="Komiyama M."/>
            <person name="Tashiro H."/>
            <person name="Tanigami A."/>
            <person name="Fujiwara T."/>
            <person name="Ono T."/>
            <person name="Yamada K."/>
            <person name="Fujii Y."/>
            <person name="Ozaki K."/>
            <person name="Hirao M."/>
            <person name="Ohmori Y."/>
            <person name="Kawabata A."/>
            <person name="Hikiji T."/>
            <person name="Kobatake N."/>
            <person name="Inagaki H."/>
            <person name="Ikema Y."/>
            <person name="Okamoto S."/>
            <person name="Okitani R."/>
            <person name="Kawakami T."/>
            <person name="Noguchi S."/>
            <person name="Itoh T."/>
            <person name="Shigeta K."/>
            <person name="Senba T."/>
            <person name="Matsumura K."/>
            <person name="Nakajima Y."/>
            <person name="Mizuno T."/>
            <person name="Morinaga M."/>
            <person name="Sasaki M."/>
            <person name="Togashi T."/>
            <person name="Oyama M."/>
            <person name="Hata H."/>
            <person name="Watanabe M."/>
            <person name="Komatsu T."/>
            <person name="Mizushima-Sugano J."/>
            <person name="Satoh T."/>
            <person name="Shirai Y."/>
            <person name="Takahashi Y."/>
            <person name="Nakagawa K."/>
            <person name="Okumura K."/>
            <person name="Nagase T."/>
            <person name="Nomura N."/>
            <person name="Kikuchi H."/>
            <person name="Masuho Y."/>
            <person name="Yamashita R."/>
            <person name="Nakai K."/>
            <person name="Yada T."/>
            <person name="Nakamura Y."/>
            <person name="Ohara O."/>
            <person name="Isogai T."/>
            <person name="Sugano S."/>
        </authorList>
    </citation>
    <scope>NUCLEOTIDE SEQUENCE [LARGE SCALE MRNA]</scope>
    <source>
        <tissue evidence="5">Teratocarcinoma</tissue>
    </source>
</reference>
<reference key="4">
    <citation type="journal article" date="2001" name="Nature">
        <title>The DNA sequence and comparative analysis of human chromosome 20.</title>
        <authorList>
            <person name="Deloukas P."/>
            <person name="Matthews L.H."/>
            <person name="Ashurst J.L."/>
            <person name="Burton J."/>
            <person name="Gilbert J.G.R."/>
            <person name="Jones M."/>
            <person name="Stavrides G."/>
            <person name="Almeida J.P."/>
            <person name="Babbage A.K."/>
            <person name="Bagguley C.L."/>
            <person name="Bailey J."/>
            <person name="Barlow K.F."/>
            <person name="Bates K.N."/>
            <person name="Beard L.M."/>
            <person name="Beare D.M."/>
            <person name="Beasley O.P."/>
            <person name="Bird C.P."/>
            <person name="Blakey S.E."/>
            <person name="Bridgeman A.M."/>
            <person name="Brown A.J."/>
            <person name="Buck D."/>
            <person name="Burrill W.D."/>
            <person name="Butler A.P."/>
            <person name="Carder C."/>
            <person name="Carter N.P."/>
            <person name="Chapman J.C."/>
            <person name="Clamp M."/>
            <person name="Clark G."/>
            <person name="Clark L.N."/>
            <person name="Clark S.Y."/>
            <person name="Clee C.M."/>
            <person name="Clegg S."/>
            <person name="Cobley V.E."/>
            <person name="Collier R.E."/>
            <person name="Connor R.E."/>
            <person name="Corby N.R."/>
            <person name="Coulson A."/>
            <person name="Coville G.J."/>
            <person name="Deadman R."/>
            <person name="Dhami P.D."/>
            <person name="Dunn M."/>
            <person name="Ellington A.G."/>
            <person name="Frankland J.A."/>
            <person name="Fraser A."/>
            <person name="French L."/>
            <person name="Garner P."/>
            <person name="Grafham D.V."/>
            <person name="Griffiths C."/>
            <person name="Griffiths M.N.D."/>
            <person name="Gwilliam R."/>
            <person name="Hall R.E."/>
            <person name="Hammond S."/>
            <person name="Harley J.L."/>
            <person name="Heath P.D."/>
            <person name="Ho S."/>
            <person name="Holden J.L."/>
            <person name="Howden P.J."/>
            <person name="Huckle E."/>
            <person name="Hunt A.R."/>
            <person name="Hunt S.E."/>
            <person name="Jekosch K."/>
            <person name="Johnson C.M."/>
            <person name="Johnson D."/>
            <person name="Kay M.P."/>
            <person name="Kimberley A.M."/>
            <person name="King A."/>
            <person name="Knights A."/>
            <person name="Laird G.K."/>
            <person name="Lawlor S."/>
            <person name="Lehvaeslaiho M.H."/>
            <person name="Leversha M.A."/>
            <person name="Lloyd C."/>
            <person name="Lloyd D.M."/>
            <person name="Lovell J.D."/>
            <person name="Marsh V.L."/>
            <person name="Martin S.L."/>
            <person name="McConnachie L.J."/>
            <person name="McLay K."/>
            <person name="McMurray A.A."/>
            <person name="Milne S.A."/>
            <person name="Mistry D."/>
            <person name="Moore M.J.F."/>
            <person name="Mullikin J.C."/>
            <person name="Nickerson T."/>
            <person name="Oliver K."/>
            <person name="Parker A."/>
            <person name="Patel R."/>
            <person name="Pearce T.A.V."/>
            <person name="Peck A.I."/>
            <person name="Phillimore B.J.C.T."/>
            <person name="Prathalingam S.R."/>
            <person name="Plumb R.W."/>
            <person name="Ramsay H."/>
            <person name="Rice C.M."/>
            <person name="Ross M.T."/>
            <person name="Scott C.E."/>
            <person name="Sehra H.K."/>
            <person name="Shownkeen R."/>
            <person name="Sims S."/>
            <person name="Skuce C.D."/>
            <person name="Smith M.L."/>
            <person name="Soderlund C."/>
            <person name="Steward C.A."/>
            <person name="Sulston J.E."/>
            <person name="Swann R.M."/>
            <person name="Sycamore N."/>
            <person name="Taylor R."/>
            <person name="Tee L."/>
            <person name="Thomas D.W."/>
            <person name="Thorpe A."/>
            <person name="Tracey A."/>
            <person name="Tromans A.C."/>
            <person name="Vaudin M."/>
            <person name="Wall M."/>
            <person name="Wallis J.M."/>
            <person name="Whitehead S.L."/>
            <person name="Whittaker P."/>
            <person name="Willey D.L."/>
            <person name="Williams L."/>
            <person name="Williams S.A."/>
            <person name="Wilming L."/>
            <person name="Wray P.W."/>
            <person name="Hubbard T."/>
            <person name="Durbin R.M."/>
            <person name="Bentley D.R."/>
            <person name="Beck S."/>
            <person name="Rogers J."/>
        </authorList>
    </citation>
    <scope>NUCLEOTIDE SEQUENCE [LARGE SCALE GENOMIC DNA]</scope>
</reference>
<reference evidence="13" key="5">
    <citation type="journal article" date="2004" name="Genome Res.">
        <title>The status, quality, and expansion of the NIH full-length cDNA project: the Mammalian Gene Collection (MGC).</title>
        <authorList>
            <consortium name="The MGC Project Team"/>
        </authorList>
    </citation>
    <scope>NUCLEOTIDE SEQUENCE [LARGE SCALE MRNA]</scope>
</reference>
<reference key="6">
    <citation type="journal article" date="2011" name="BMC Syst. Biol.">
        <title>Initial characterization of the human central proteome.</title>
        <authorList>
            <person name="Burkard T.R."/>
            <person name="Planyavsky M."/>
            <person name="Kaupe I."/>
            <person name="Breitwieser F.P."/>
            <person name="Buerckstuemmer T."/>
            <person name="Bennett K.L."/>
            <person name="Superti-Furga G."/>
            <person name="Colinge J."/>
        </authorList>
    </citation>
    <scope>IDENTIFICATION BY MASS SPECTROMETRY [LARGE SCALE ANALYSIS]</scope>
</reference>
<reference key="7">
    <citation type="journal article" date="2019" name="Science">
        <title>A bacterial light response reveals an orphan desaturase for human plasmalogen synthesis.</title>
        <authorList>
            <person name="Gallego-Garcia A."/>
            <person name="Monera-Girona A.J."/>
            <person name="Pajares-Martinez E."/>
            <person name="Bastida-Martinez E."/>
            <person name="Perez-Castano R."/>
            <person name="Iniesta A.A."/>
            <person name="Fontes M."/>
            <person name="Padmanabhan S."/>
            <person name="Elias-Arnanz M."/>
        </authorList>
    </citation>
    <scope>FUNCTION</scope>
    <scope>CATALYTIC ACTIVITY</scope>
    <scope>SUBCELLULAR LOCATION</scope>
    <scope>DOMAIN</scope>
    <scope>PATHWAY</scope>
    <scope>MUTAGENESIS OF HIS-95; HIS-120; HIS-121; HIS-130; HIS-186; HIS-190; HIS-206; HIS-213; HIS-214; HIS-217; HIS-218 AND HIS-222</scope>
</reference>
<reference key="8">
    <citation type="journal article" date="2020" name="Proc. Natl. Acad. Sci. U.S.A.">
        <title>The TMEM189 gene encodes plasmanylethanolamine desaturase which introduces the characteristic vinyl ether double bond into plasmalogens.</title>
        <authorList>
            <person name="Werner E.R."/>
            <person name="Keller M.A."/>
            <person name="Sailer S."/>
            <person name="Lackner K."/>
            <person name="Koch J."/>
            <person name="Hermann M."/>
            <person name="Coassin S."/>
            <person name="Golderer G."/>
            <person name="Werner-Felmayer G."/>
            <person name="Zoeller R.A."/>
            <person name="Hulo N."/>
            <person name="Berger J."/>
            <person name="Watschinger K."/>
        </authorList>
    </citation>
    <scope>FUNCTION</scope>
    <scope>CATALYTIC ACTIVITY</scope>
</reference>
<reference key="9">
    <citation type="journal article" date="2021" name="Nat. Genet.">
        <title>A genome-wide atlas of co-essential modules assigns function to uncharacterized genes.</title>
        <authorList>
            <person name="Wainberg M."/>
            <person name="Kamber R.A."/>
            <person name="Balsubramani A."/>
            <person name="Meyers R.M."/>
            <person name="Sinnott-Armstrong N."/>
            <person name="Hornburg D."/>
            <person name="Jiang L."/>
            <person name="Chan J."/>
            <person name="Jian R."/>
            <person name="Gu M."/>
            <person name="Shcherbina A."/>
            <person name="Dubreuil M.M."/>
            <person name="Spees K."/>
            <person name="Meuleman W."/>
            <person name="Snyder M.P."/>
            <person name="Bassik M.C."/>
            <person name="Kundaje A."/>
        </authorList>
    </citation>
    <scope>FUNCTION</scope>
</reference>
<keyword id="KW-0025">Alternative splicing</keyword>
<keyword id="KW-0256">Endoplasmic reticulum</keyword>
<keyword id="KW-0276">Fatty acid metabolism</keyword>
<keyword id="KW-0443">Lipid metabolism</keyword>
<keyword id="KW-0472">Membrane</keyword>
<keyword id="KW-0560">Oxidoreductase</keyword>
<keyword id="KW-1267">Proteomics identification</keyword>
<keyword id="KW-1185">Reference proteome</keyword>
<keyword id="KW-0812">Transmembrane</keyword>
<keyword id="KW-1133">Transmembrane helix</keyword>
<gene>
    <name evidence="14" type="primary">PEDS1</name>
    <name evidence="9" type="synonym">KUA</name>
    <name evidence="11" type="synonym">PEDS</name>
    <name evidence="11 13" type="synonym">TMEM189</name>
</gene>
<comment type="function">
    <text evidence="6 7 8 10">Plasmanylethanolamine desaturase involved in plasmalogen biogenesis in the endoplasmic reticulum membrane (PubMed:31604315, PubMed:32209662, PubMed:33859415). Plasmalogens are glycerophospholipids with a hydrocarbon chain linked by a vinyl ether bond at the glycerol sn-1 position, and are involved in antioxidative and signaling mechanisms (PubMed:31604315).</text>
</comment>
<comment type="catalytic activity">
    <reaction evidence="6 7">
        <text>a 1-(1,2-saturated alkyl)-2-acyl-sn-glycero-3-phosphoethanolamine + 2 Fe(II)-[cytochrome b5] + O2 + 2 H(+) = a 1-O-(1Z-alkenyl)-2-acyl-sn-glycero-3-phosphoethanolamine + 2 Fe(III)-[cytochrome b5] + 2 H2O</text>
        <dbReference type="Rhea" id="RHEA:22956"/>
        <dbReference type="Rhea" id="RHEA-COMP:10438"/>
        <dbReference type="Rhea" id="RHEA-COMP:10439"/>
        <dbReference type="ChEBI" id="CHEBI:15377"/>
        <dbReference type="ChEBI" id="CHEBI:15378"/>
        <dbReference type="ChEBI" id="CHEBI:15379"/>
        <dbReference type="ChEBI" id="CHEBI:29033"/>
        <dbReference type="ChEBI" id="CHEBI:29034"/>
        <dbReference type="ChEBI" id="CHEBI:75028"/>
        <dbReference type="ChEBI" id="CHEBI:77290"/>
        <dbReference type="EC" id="1.14.19.77"/>
    </reaction>
    <physiologicalReaction direction="left-to-right" evidence="6">
        <dbReference type="Rhea" id="RHEA:22957"/>
    </physiologicalReaction>
</comment>
<comment type="catalytic activity">
    <reaction evidence="6">
        <text>a 1-O-hexadecyl-2-acyl-sn-glycero-3-phosphoethanolamine + 2 Fe(II)-[cytochrome b5] + O2 + 2 H(+) = a 1-O-(1Z-hexadecenyl)-2-acyl-sn-glycero-3-phosphoethanolamine + 2 Fe(III)-[cytochrome b5] + 2 H2O</text>
        <dbReference type="Rhea" id="RHEA:61960"/>
        <dbReference type="Rhea" id="RHEA-COMP:10438"/>
        <dbReference type="Rhea" id="RHEA-COMP:10439"/>
        <dbReference type="ChEBI" id="CHEBI:15377"/>
        <dbReference type="ChEBI" id="CHEBI:15378"/>
        <dbReference type="ChEBI" id="CHEBI:15379"/>
        <dbReference type="ChEBI" id="CHEBI:29033"/>
        <dbReference type="ChEBI" id="CHEBI:29034"/>
        <dbReference type="ChEBI" id="CHEBI:145181"/>
        <dbReference type="ChEBI" id="CHEBI:145186"/>
    </reaction>
    <physiologicalReaction direction="left-to-right" evidence="6">
        <dbReference type="Rhea" id="RHEA:61961"/>
    </physiologicalReaction>
</comment>
<comment type="catalytic activity">
    <reaction evidence="6">
        <text>a 1-O-octadecyl-2-acyl-sn-glycero-3-phosphoethanolamine + 2 Fe(II)-[cytochrome b5] + O2 + 2 H(+) = a 1-O-(1Z-octadecenyl)-2-acyl-sn-glycero-3-phosphoethanolamine + 2 Fe(III)-[cytochrome b5] + 2 H2O</text>
        <dbReference type="Rhea" id="RHEA:61964"/>
        <dbReference type="Rhea" id="RHEA-COMP:10438"/>
        <dbReference type="Rhea" id="RHEA-COMP:10439"/>
        <dbReference type="ChEBI" id="CHEBI:15377"/>
        <dbReference type="ChEBI" id="CHEBI:15378"/>
        <dbReference type="ChEBI" id="CHEBI:15379"/>
        <dbReference type="ChEBI" id="CHEBI:29033"/>
        <dbReference type="ChEBI" id="CHEBI:29034"/>
        <dbReference type="ChEBI" id="CHEBI:145182"/>
        <dbReference type="ChEBI" id="CHEBI:145187"/>
    </reaction>
    <physiologicalReaction direction="left-to-right" evidence="6">
        <dbReference type="Rhea" id="RHEA:61965"/>
    </physiologicalReaction>
</comment>
<comment type="catalytic activity">
    <reaction evidence="6">
        <text>a 1-O-(9Z-octadecenyl)-2-acyl-sn-glycero-3-phosphoethanolamine + 2 Fe(II)-[cytochrome b5] + O2 + 2 H(+) = a 1-O-(1Z,9Z-octadecadienyl)-2-acyl-sn-glycero-3-phosphoethanolamine + 2 Fe(III)-[cytochrome b5] + 2 H2O</text>
        <dbReference type="Rhea" id="RHEA:61968"/>
        <dbReference type="Rhea" id="RHEA-COMP:10438"/>
        <dbReference type="Rhea" id="RHEA-COMP:10439"/>
        <dbReference type="ChEBI" id="CHEBI:15377"/>
        <dbReference type="ChEBI" id="CHEBI:15378"/>
        <dbReference type="ChEBI" id="CHEBI:15379"/>
        <dbReference type="ChEBI" id="CHEBI:29033"/>
        <dbReference type="ChEBI" id="CHEBI:29034"/>
        <dbReference type="ChEBI" id="CHEBI:145183"/>
        <dbReference type="ChEBI" id="CHEBI:145188"/>
    </reaction>
    <physiologicalReaction direction="left-to-right" evidence="6">
        <dbReference type="Rhea" id="RHEA:61969"/>
    </physiologicalReaction>
</comment>
<comment type="pathway">
    <text evidence="6">Lipid metabolism; fatty acid metabolism.</text>
</comment>
<comment type="interaction">
    <interactant intactId="EBI-11337896">
        <id>A5PLL7</id>
    </interactant>
    <interactant intactId="EBI-21591415">
        <id>P13473-2</id>
        <label>LAMP2</label>
    </interactant>
    <organismsDiffer>false</organismsDiffer>
    <experiments>3</experiments>
</comment>
<comment type="interaction">
    <interactant intactId="EBI-11337896">
        <id>A5PLL7</id>
    </interactant>
    <interactant intactId="EBI-2623095">
        <id>Q9Y371</id>
        <label>SH3GLB1</label>
    </interactant>
    <organismsDiffer>false</organismsDiffer>
    <experiments>3</experiments>
</comment>
<comment type="subcellular location">
    <subcellularLocation>
        <location evidence="3 6">Endoplasmic reticulum membrane</location>
        <topology evidence="2">Multi-pass membrane protein</topology>
    </subcellularLocation>
</comment>
<comment type="alternative products">
    <event type="alternative splicing"/>
    <isoform>
        <id>A5PLL7-1</id>
        <name>1</name>
        <sequence type="displayed"/>
    </isoform>
    <isoform>
        <id>A5PLL7-2</id>
        <name>2</name>
        <sequence type="described" ref="VSP_054091"/>
    </isoform>
</comment>
<comment type="domain">
    <text evidence="6">Histidine box-1 and -2 together with other histidine residues are essential for catalytic activity.</text>
</comment>
<comment type="miscellaneous">
    <text evidence="3">In human, PEDS1 and UBE2V1 are adjacent genes which can produce independent proteins and can also be fused to form a PEDS1-UBE2V1 hybrid protein.</text>
</comment>
<comment type="similarity">
    <text evidence="12">Belongs to the fatty acid desaturase CarF family.</text>
</comment>
<evidence type="ECO:0000250" key="1">
    <source>
        <dbReference type="UniProtKB" id="Q99LQ7"/>
    </source>
</evidence>
<evidence type="ECO:0000255" key="2"/>
<evidence type="ECO:0000269" key="3">
    <source>
    </source>
</evidence>
<evidence type="ECO:0000269" key="4">
    <source>
    </source>
</evidence>
<evidence type="ECO:0000269" key="5">
    <source>
    </source>
</evidence>
<evidence type="ECO:0000269" key="6">
    <source>
    </source>
</evidence>
<evidence type="ECO:0000269" key="7">
    <source>
    </source>
</evidence>
<evidence type="ECO:0000269" key="8">
    <source>
    </source>
</evidence>
<evidence type="ECO:0000303" key="9">
    <source>
    </source>
</evidence>
<evidence type="ECO:0000303" key="10">
    <source>
    </source>
</evidence>
<evidence type="ECO:0000303" key="11">
    <source>
    </source>
</evidence>
<evidence type="ECO:0000305" key="12"/>
<evidence type="ECO:0000312" key="13">
    <source>
        <dbReference type="EMBL" id="AAI42967.1"/>
    </source>
</evidence>
<evidence type="ECO:0000312" key="14">
    <source>
        <dbReference type="HGNC" id="HGNC:16735"/>
    </source>
</evidence>